<name>LEUC_SHESM</name>
<proteinExistence type="inferred from homology"/>
<reference key="1">
    <citation type="submission" date="2006-08" db="EMBL/GenBank/DDBJ databases">
        <title>Complete sequence of Shewanella sp. MR-4.</title>
        <authorList>
            <consortium name="US DOE Joint Genome Institute"/>
            <person name="Copeland A."/>
            <person name="Lucas S."/>
            <person name="Lapidus A."/>
            <person name="Barry K."/>
            <person name="Detter J.C."/>
            <person name="Glavina del Rio T."/>
            <person name="Hammon N."/>
            <person name="Israni S."/>
            <person name="Dalin E."/>
            <person name="Tice H."/>
            <person name="Pitluck S."/>
            <person name="Kiss H."/>
            <person name="Brettin T."/>
            <person name="Bruce D."/>
            <person name="Han C."/>
            <person name="Tapia R."/>
            <person name="Gilna P."/>
            <person name="Schmutz J."/>
            <person name="Larimer F."/>
            <person name="Land M."/>
            <person name="Hauser L."/>
            <person name="Kyrpides N."/>
            <person name="Mikhailova N."/>
            <person name="Nealson K."/>
            <person name="Konstantinidis K."/>
            <person name="Klappenbach J."/>
            <person name="Tiedje J."/>
            <person name="Richardson P."/>
        </authorList>
    </citation>
    <scope>NUCLEOTIDE SEQUENCE [LARGE SCALE GENOMIC DNA]</scope>
    <source>
        <strain>MR-4</strain>
    </source>
</reference>
<feature type="chain" id="PRO_1000063608" description="3-isopropylmalate dehydratase large subunit">
    <location>
        <begin position="1"/>
        <end position="474"/>
    </location>
</feature>
<feature type="binding site" evidence="1">
    <location>
        <position position="355"/>
    </location>
    <ligand>
        <name>[4Fe-4S] cluster</name>
        <dbReference type="ChEBI" id="CHEBI:49883"/>
    </ligand>
</feature>
<feature type="binding site" evidence="1">
    <location>
        <position position="415"/>
    </location>
    <ligand>
        <name>[4Fe-4S] cluster</name>
        <dbReference type="ChEBI" id="CHEBI:49883"/>
    </ligand>
</feature>
<feature type="binding site" evidence="1">
    <location>
        <position position="418"/>
    </location>
    <ligand>
        <name>[4Fe-4S] cluster</name>
        <dbReference type="ChEBI" id="CHEBI:49883"/>
    </ligand>
</feature>
<keyword id="KW-0004">4Fe-4S</keyword>
<keyword id="KW-0028">Amino-acid biosynthesis</keyword>
<keyword id="KW-0100">Branched-chain amino acid biosynthesis</keyword>
<keyword id="KW-0408">Iron</keyword>
<keyword id="KW-0411">Iron-sulfur</keyword>
<keyword id="KW-0432">Leucine biosynthesis</keyword>
<keyword id="KW-0456">Lyase</keyword>
<keyword id="KW-0479">Metal-binding</keyword>
<gene>
    <name evidence="1" type="primary">leuC</name>
    <name type="ordered locus">Shewmr4_3586</name>
</gene>
<organism>
    <name type="scientific">Shewanella sp. (strain MR-4)</name>
    <dbReference type="NCBI Taxonomy" id="60480"/>
    <lineage>
        <taxon>Bacteria</taxon>
        <taxon>Pseudomonadati</taxon>
        <taxon>Pseudomonadota</taxon>
        <taxon>Gammaproteobacteria</taxon>
        <taxon>Alteromonadales</taxon>
        <taxon>Shewanellaceae</taxon>
        <taxon>Shewanella</taxon>
    </lineage>
</organism>
<comment type="function">
    <text evidence="1">Catalyzes the isomerization between 2-isopropylmalate and 3-isopropylmalate, via the formation of 2-isopropylmaleate.</text>
</comment>
<comment type="catalytic activity">
    <reaction evidence="1">
        <text>(2R,3S)-3-isopropylmalate = (2S)-2-isopropylmalate</text>
        <dbReference type="Rhea" id="RHEA:32287"/>
        <dbReference type="ChEBI" id="CHEBI:1178"/>
        <dbReference type="ChEBI" id="CHEBI:35121"/>
        <dbReference type="EC" id="4.2.1.33"/>
    </reaction>
</comment>
<comment type="cofactor">
    <cofactor evidence="1">
        <name>[4Fe-4S] cluster</name>
        <dbReference type="ChEBI" id="CHEBI:49883"/>
    </cofactor>
    <text evidence="1">Binds 1 [4Fe-4S] cluster per subunit.</text>
</comment>
<comment type="pathway">
    <text evidence="1">Amino-acid biosynthesis; L-leucine biosynthesis; L-leucine from 3-methyl-2-oxobutanoate: step 2/4.</text>
</comment>
<comment type="subunit">
    <text evidence="1">Heterodimer of LeuC and LeuD.</text>
</comment>
<comment type="similarity">
    <text evidence="1">Belongs to the aconitase/IPM isomerase family. LeuC type 1 subfamily.</text>
</comment>
<evidence type="ECO:0000255" key="1">
    <source>
        <dbReference type="HAMAP-Rule" id="MF_01026"/>
    </source>
</evidence>
<accession>Q0HE67</accession>
<sequence>MTTPSTSTAPKTLYQKVWDAHVVATPEGEAPIIYVDRHLVHEVTSPQAFSGLKVAGRKLRAPEKTFATMDHNTSTRSASLDALSPMARTQVETLAQNCKDFGVRLYDIHHPNQGIVHVMGPELGITLPGTVIVCGDSHTATHGAFGALAFGIGTSEVEHVLATQTLRQLKAKTMKIEVRGQVTDGVTAKDIVLAIIGKIGMDGGTGYVVEFCGEAIEALSMEGRMTVCNMAIEMGAKAGMVAPDQTTFDYLEGREFAPKGEDWAEAVAAWKALKTDVGAEFDASVVLDAADIAPQLTWGTNPGQVVAIDAPVPNPADEANPTIRASMEKALDYIGLTAGTPMTDVAINKVFIGSCTNSRIEDLRSAAKQAKGRKVASGVTAIVVPGSGQVKAQAEAEGLDKIFIEAGFEWRLPGCSMCLAMNDDRLEAGDRCASTSNRNFEGRQGRGSRTHLVSPAMAAAAAIAGHFVDIRKPY</sequence>
<protein>
    <recommendedName>
        <fullName evidence="1">3-isopropylmalate dehydratase large subunit</fullName>
        <ecNumber evidence="1">4.2.1.33</ecNumber>
    </recommendedName>
    <alternativeName>
        <fullName evidence="1">Alpha-IPM isomerase</fullName>
        <shortName evidence="1">IPMI</shortName>
    </alternativeName>
    <alternativeName>
        <fullName evidence="1">Isopropylmalate isomerase</fullName>
    </alternativeName>
</protein>
<dbReference type="EC" id="4.2.1.33" evidence="1"/>
<dbReference type="EMBL" id="CP000446">
    <property type="protein sequence ID" value="ABI40650.1"/>
    <property type="molecule type" value="Genomic_DNA"/>
</dbReference>
<dbReference type="RefSeq" id="WP_011624313.1">
    <property type="nucleotide sequence ID" value="NC_008321.1"/>
</dbReference>
<dbReference type="SMR" id="Q0HE67"/>
<dbReference type="KEGG" id="she:Shewmr4_3586"/>
<dbReference type="HOGENOM" id="CLU_006714_3_4_6"/>
<dbReference type="UniPathway" id="UPA00048">
    <property type="reaction ID" value="UER00071"/>
</dbReference>
<dbReference type="GO" id="GO:0003861">
    <property type="term" value="F:3-isopropylmalate dehydratase activity"/>
    <property type="evidence" value="ECO:0007669"/>
    <property type="project" value="UniProtKB-UniRule"/>
</dbReference>
<dbReference type="GO" id="GO:0051539">
    <property type="term" value="F:4 iron, 4 sulfur cluster binding"/>
    <property type="evidence" value="ECO:0007669"/>
    <property type="project" value="UniProtKB-KW"/>
</dbReference>
<dbReference type="GO" id="GO:0046872">
    <property type="term" value="F:metal ion binding"/>
    <property type="evidence" value="ECO:0007669"/>
    <property type="project" value="UniProtKB-KW"/>
</dbReference>
<dbReference type="GO" id="GO:0009098">
    <property type="term" value="P:L-leucine biosynthetic process"/>
    <property type="evidence" value="ECO:0007669"/>
    <property type="project" value="UniProtKB-UniRule"/>
</dbReference>
<dbReference type="CDD" id="cd01583">
    <property type="entry name" value="IPMI"/>
    <property type="match status" value="1"/>
</dbReference>
<dbReference type="FunFam" id="3.30.499.10:FF:000006">
    <property type="entry name" value="3-isopropylmalate dehydratase large subunit"/>
    <property type="match status" value="1"/>
</dbReference>
<dbReference type="FunFam" id="3.30.499.10:FF:000007">
    <property type="entry name" value="3-isopropylmalate dehydratase large subunit"/>
    <property type="match status" value="1"/>
</dbReference>
<dbReference type="Gene3D" id="3.30.499.10">
    <property type="entry name" value="Aconitase, domain 3"/>
    <property type="match status" value="2"/>
</dbReference>
<dbReference type="HAMAP" id="MF_01026">
    <property type="entry name" value="LeuC_type1"/>
    <property type="match status" value="1"/>
</dbReference>
<dbReference type="InterPro" id="IPR004430">
    <property type="entry name" value="3-IsopropMal_deHydase_lsu"/>
</dbReference>
<dbReference type="InterPro" id="IPR015931">
    <property type="entry name" value="Acnase/IPM_dHydase_lsu_aba_1/3"/>
</dbReference>
<dbReference type="InterPro" id="IPR001030">
    <property type="entry name" value="Acoase/IPM_deHydtase_lsu_aba"/>
</dbReference>
<dbReference type="InterPro" id="IPR018136">
    <property type="entry name" value="Aconitase_4Fe-4S_BS"/>
</dbReference>
<dbReference type="InterPro" id="IPR036008">
    <property type="entry name" value="Aconitase_4Fe-4S_dom"/>
</dbReference>
<dbReference type="InterPro" id="IPR050067">
    <property type="entry name" value="IPM_dehydratase_rel_enz"/>
</dbReference>
<dbReference type="InterPro" id="IPR033941">
    <property type="entry name" value="IPMI_cat"/>
</dbReference>
<dbReference type="NCBIfam" id="TIGR00170">
    <property type="entry name" value="leuC"/>
    <property type="match status" value="1"/>
</dbReference>
<dbReference type="NCBIfam" id="NF004016">
    <property type="entry name" value="PRK05478.1"/>
    <property type="match status" value="1"/>
</dbReference>
<dbReference type="NCBIfam" id="NF009116">
    <property type="entry name" value="PRK12466.1"/>
    <property type="match status" value="1"/>
</dbReference>
<dbReference type="PANTHER" id="PTHR43822:SF9">
    <property type="entry name" value="3-ISOPROPYLMALATE DEHYDRATASE"/>
    <property type="match status" value="1"/>
</dbReference>
<dbReference type="PANTHER" id="PTHR43822">
    <property type="entry name" value="HOMOACONITASE, MITOCHONDRIAL-RELATED"/>
    <property type="match status" value="1"/>
</dbReference>
<dbReference type="Pfam" id="PF00330">
    <property type="entry name" value="Aconitase"/>
    <property type="match status" value="1"/>
</dbReference>
<dbReference type="PRINTS" id="PR00415">
    <property type="entry name" value="ACONITASE"/>
</dbReference>
<dbReference type="SUPFAM" id="SSF53732">
    <property type="entry name" value="Aconitase iron-sulfur domain"/>
    <property type="match status" value="1"/>
</dbReference>
<dbReference type="PROSITE" id="PS00450">
    <property type="entry name" value="ACONITASE_1"/>
    <property type="match status" value="1"/>
</dbReference>
<dbReference type="PROSITE" id="PS01244">
    <property type="entry name" value="ACONITASE_2"/>
    <property type="match status" value="1"/>
</dbReference>